<protein>
    <recommendedName>
        <fullName evidence="1">Large ribosomal subunit protein bL9</fullName>
    </recommendedName>
    <alternativeName>
        <fullName evidence="3">50S ribosomal protein L9</fullName>
    </alternativeName>
</protein>
<organism>
    <name type="scientific">Maridesulfovibrio salexigens (strain ATCC 14822 / DSM 2638 / NCIMB 8403 / VKM B-1763)</name>
    <name type="common">Desulfovibrio salexigens</name>
    <dbReference type="NCBI Taxonomy" id="526222"/>
    <lineage>
        <taxon>Bacteria</taxon>
        <taxon>Pseudomonadati</taxon>
        <taxon>Thermodesulfobacteriota</taxon>
        <taxon>Desulfovibrionia</taxon>
        <taxon>Desulfovibrionales</taxon>
        <taxon>Desulfovibrionaceae</taxon>
        <taxon>Maridesulfovibrio</taxon>
    </lineage>
</organism>
<dbReference type="EMBL" id="CP001649">
    <property type="protein sequence ID" value="ACS80085.1"/>
    <property type="molecule type" value="Genomic_DNA"/>
</dbReference>
<dbReference type="RefSeq" id="WP_015851901.1">
    <property type="nucleotide sequence ID" value="NC_012881.1"/>
</dbReference>
<dbReference type="SMR" id="C6BVB0"/>
<dbReference type="STRING" id="526222.Desal_2025"/>
<dbReference type="KEGG" id="dsa:Desal_2025"/>
<dbReference type="eggNOG" id="COG0359">
    <property type="taxonomic scope" value="Bacteria"/>
</dbReference>
<dbReference type="HOGENOM" id="CLU_078938_3_0_7"/>
<dbReference type="OrthoDB" id="9788336at2"/>
<dbReference type="Proteomes" id="UP000002601">
    <property type="component" value="Chromosome"/>
</dbReference>
<dbReference type="GO" id="GO:1990904">
    <property type="term" value="C:ribonucleoprotein complex"/>
    <property type="evidence" value="ECO:0007669"/>
    <property type="project" value="UniProtKB-KW"/>
</dbReference>
<dbReference type="GO" id="GO:0005840">
    <property type="term" value="C:ribosome"/>
    <property type="evidence" value="ECO:0007669"/>
    <property type="project" value="UniProtKB-KW"/>
</dbReference>
<dbReference type="GO" id="GO:0019843">
    <property type="term" value="F:rRNA binding"/>
    <property type="evidence" value="ECO:0007669"/>
    <property type="project" value="UniProtKB-UniRule"/>
</dbReference>
<dbReference type="GO" id="GO:0003735">
    <property type="term" value="F:structural constituent of ribosome"/>
    <property type="evidence" value="ECO:0007669"/>
    <property type="project" value="InterPro"/>
</dbReference>
<dbReference type="GO" id="GO:0006412">
    <property type="term" value="P:translation"/>
    <property type="evidence" value="ECO:0007669"/>
    <property type="project" value="UniProtKB-UniRule"/>
</dbReference>
<dbReference type="Gene3D" id="3.10.430.100">
    <property type="entry name" value="Ribosomal protein L9, C-terminal domain"/>
    <property type="match status" value="1"/>
</dbReference>
<dbReference type="Gene3D" id="3.40.5.10">
    <property type="entry name" value="Ribosomal protein L9, N-terminal domain"/>
    <property type="match status" value="1"/>
</dbReference>
<dbReference type="HAMAP" id="MF_00503">
    <property type="entry name" value="Ribosomal_bL9"/>
    <property type="match status" value="1"/>
</dbReference>
<dbReference type="InterPro" id="IPR000244">
    <property type="entry name" value="Ribosomal_bL9"/>
</dbReference>
<dbReference type="InterPro" id="IPR009027">
    <property type="entry name" value="Ribosomal_bL9/RNase_H1_N"/>
</dbReference>
<dbReference type="InterPro" id="IPR020594">
    <property type="entry name" value="Ribosomal_bL9_bac/chp"/>
</dbReference>
<dbReference type="InterPro" id="IPR020069">
    <property type="entry name" value="Ribosomal_bL9_C"/>
</dbReference>
<dbReference type="InterPro" id="IPR036791">
    <property type="entry name" value="Ribosomal_bL9_C_sf"/>
</dbReference>
<dbReference type="InterPro" id="IPR020070">
    <property type="entry name" value="Ribosomal_bL9_N"/>
</dbReference>
<dbReference type="InterPro" id="IPR036935">
    <property type="entry name" value="Ribosomal_bL9_N_sf"/>
</dbReference>
<dbReference type="NCBIfam" id="TIGR00158">
    <property type="entry name" value="L9"/>
    <property type="match status" value="1"/>
</dbReference>
<dbReference type="PANTHER" id="PTHR21368">
    <property type="entry name" value="50S RIBOSOMAL PROTEIN L9"/>
    <property type="match status" value="1"/>
</dbReference>
<dbReference type="Pfam" id="PF03948">
    <property type="entry name" value="Ribosomal_L9_C"/>
    <property type="match status" value="1"/>
</dbReference>
<dbReference type="Pfam" id="PF01281">
    <property type="entry name" value="Ribosomal_L9_N"/>
    <property type="match status" value="1"/>
</dbReference>
<dbReference type="SUPFAM" id="SSF55658">
    <property type="entry name" value="L9 N-domain-like"/>
    <property type="match status" value="1"/>
</dbReference>
<dbReference type="SUPFAM" id="SSF55653">
    <property type="entry name" value="Ribosomal protein L9 C-domain"/>
    <property type="match status" value="1"/>
</dbReference>
<dbReference type="PROSITE" id="PS00651">
    <property type="entry name" value="RIBOSOMAL_L9"/>
    <property type="match status" value="1"/>
</dbReference>
<feature type="chain" id="PRO_1000206542" description="Large ribosomal subunit protein bL9">
    <location>
        <begin position="1"/>
        <end position="177"/>
    </location>
</feature>
<feature type="region of interest" description="Disordered" evidence="2">
    <location>
        <begin position="151"/>
        <end position="177"/>
    </location>
</feature>
<reference key="1">
    <citation type="submission" date="2009-06" db="EMBL/GenBank/DDBJ databases">
        <title>Complete sequence of Desulfovibrio salexigens DSM 2638.</title>
        <authorList>
            <consortium name="US DOE Joint Genome Institute"/>
            <person name="Lucas S."/>
            <person name="Copeland A."/>
            <person name="Lapidus A."/>
            <person name="Glavina del Rio T."/>
            <person name="Tice H."/>
            <person name="Bruce D."/>
            <person name="Goodwin L."/>
            <person name="Pitluck S."/>
            <person name="Munk A.C."/>
            <person name="Brettin T."/>
            <person name="Detter J.C."/>
            <person name="Han C."/>
            <person name="Tapia R."/>
            <person name="Larimer F."/>
            <person name="Land M."/>
            <person name="Hauser L."/>
            <person name="Kyrpides N."/>
            <person name="Anderson I."/>
            <person name="Wall J.D."/>
            <person name="Arkin A.P."/>
            <person name="Dehal P."/>
            <person name="Chivian D."/>
            <person name="Giles B."/>
            <person name="Hazen T.C."/>
        </authorList>
    </citation>
    <scope>NUCLEOTIDE SEQUENCE [LARGE SCALE GENOMIC DNA]</scope>
    <source>
        <strain>ATCC 14822 / DSM 2638 / NCIMB 8403 / VKM B-1763</strain>
    </source>
</reference>
<gene>
    <name evidence="1" type="primary">rplI</name>
    <name type="ordered locus">Desal_2025</name>
</gene>
<accession>C6BVB0</accession>
<evidence type="ECO:0000255" key="1">
    <source>
        <dbReference type="HAMAP-Rule" id="MF_00503"/>
    </source>
</evidence>
<evidence type="ECO:0000256" key="2">
    <source>
        <dbReference type="SAM" id="MobiDB-lite"/>
    </source>
</evidence>
<evidence type="ECO:0000305" key="3"/>
<keyword id="KW-1185">Reference proteome</keyword>
<keyword id="KW-0687">Ribonucleoprotein</keyword>
<keyword id="KW-0689">Ribosomal protein</keyword>
<keyword id="KW-0694">RNA-binding</keyword>
<keyword id="KW-0699">rRNA-binding</keyword>
<sequence>MKLILRADVDALGSLGDIVTVKAGYGRNYLIPQGLAMPASEANLKQFELEKRKLQEMADNLRTQAEGLRDKLAEVEVKIEVRVGEGDKLYGSVTAVNIADALAEMDFDIDRRKILLSDPIRSLGEYDIEIKLHPEVRGEVKLVVAKVGGPVEEEPAEEVEAPAETEVAEDAEEATEA</sequence>
<name>RL9_MARSD</name>
<comment type="function">
    <text evidence="1">Binds to the 23S rRNA.</text>
</comment>
<comment type="similarity">
    <text evidence="1">Belongs to the bacterial ribosomal protein bL9 family.</text>
</comment>
<proteinExistence type="inferred from homology"/>